<comment type="function">
    <text evidence="1">Catalyzes the interconversion of methylthioribose-1-phosphate (MTR-1-P) into methylthioribulose-1-phosphate (MTRu-1-P).</text>
</comment>
<comment type="catalytic activity">
    <reaction evidence="1">
        <text>5-(methylsulfanyl)-alpha-D-ribose 1-phosphate = 5-(methylsulfanyl)-D-ribulose 1-phosphate</text>
        <dbReference type="Rhea" id="RHEA:19989"/>
        <dbReference type="ChEBI" id="CHEBI:58533"/>
        <dbReference type="ChEBI" id="CHEBI:58548"/>
        <dbReference type="EC" id="5.3.1.23"/>
    </reaction>
</comment>
<comment type="pathway">
    <text evidence="1">Amino-acid biosynthesis; L-methionine biosynthesis via salvage pathway; L-methionine from S-methyl-5-thio-alpha-D-ribose 1-phosphate: step 1/6.</text>
</comment>
<comment type="subcellular location">
    <subcellularLocation>
        <location evidence="1">Cytoplasm</location>
    </subcellularLocation>
    <subcellularLocation>
        <location evidence="1">Nucleus</location>
    </subcellularLocation>
</comment>
<comment type="alternative products">
    <event type="alternative splicing"/>
    <isoform>
        <id>Q9ZUG4-1</id>
        <name>1</name>
        <sequence type="displayed"/>
    </isoform>
    <isoform>
        <id>Q9ZUG4-2</id>
        <name>2</name>
        <sequence type="described" ref="VSP_040227"/>
    </isoform>
</comment>
<comment type="similarity">
    <text evidence="1">Belongs to the eIF-2B alpha/beta/delta subunits family. MtnA subfamily.</text>
</comment>
<comment type="sequence caution" evidence="3">
    <conflict type="erroneous initiation">
        <sequence resource="EMBL-CDS" id="AAM20446"/>
    </conflict>
    <text>Truncated N-terminus.</text>
</comment>
<reference key="1">
    <citation type="journal article" date="1999" name="Nature">
        <title>Sequence and analysis of chromosome 2 of the plant Arabidopsis thaliana.</title>
        <authorList>
            <person name="Lin X."/>
            <person name="Kaul S."/>
            <person name="Rounsley S.D."/>
            <person name="Shea T.P."/>
            <person name="Benito M.-I."/>
            <person name="Town C.D."/>
            <person name="Fujii C.Y."/>
            <person name="Mason T.M."/>
            <person name="Bowman C.L."/>
            <person name="Barnstead M.E."/>
            <person name="Feldblyum T.V."/>
            <person name="Buell C.R."/>
            <person name="Ketchum K.A."/>
            <person name="Lee J.J."/>
            <person name="Ronning C.M."/>
            <person name="Koo H.L."/>
            <person name="Moffat K.S."/>
            <person name="Cronin L.A."/>
            <person name="Shen M."/>
            <person name="Pai G."/>
            <person name="Van Aken S."/>
            <person name="Umayam L."/>
            <person name="Tallon L.J."/>
            <person name="Gill J.E."/>
            <person name="Adams M.D."/>
            <person name="Carrera A.J."/>
            <person name="Creasy T.H."/>
            <person name="Goodman H.M."/>
            <person name="Somerville C.R."/>
            <person name="Copenhaver G.P."/>
            <person name="Preuss D."/>
            <person name="Nierman W.C."/>
            <person name="White O."/>
            <person name="Eisen J.A."/>
            <person name="Salzberg S.L."/>
            <person name="Fraser C.M."/>
            <person name="Venter J.C."/>
        </authorList>
    </citation>
    <scope>NUCLEOTIDE SEQUENCE [LARGE SCALE GENOMIC DNA]</scope>
    <source>
        <strain>cv. Columbia</strain>
    </source>
</reference>
<reference key="2">
    <citation type="journal article" date="2017" name="Plant J.">
        <title>Araport11: a complete reannotation of the Arabidopsis thaliana reference genome.</title>
        <authorList>
            <person name="Cheng C.Y."/>
            <person name="Krishnakumar V."/>
            <person name="Chan A.P."/>
            <person name="Thibaud-Nissen F."/>
            <person name="Schobel S."/>
            <person name="Town C.D."/>
        </authorList>
    </citation>
    <scope>GENOME REANNOTATION</scope>
    <source>
        <strain>cv. Columbia</strain>
    </source>
</reference>
<reference key="3">
    <citation type="journal article" date="2004" name="Genome Res.">
        <title>Whole genome sequence comparisons and 'full-length' cDNA sequences: a combined approach to evaluate and improve Arabidopsis genome annotation.</title>
        <authorList>
            <person name="Castelli V."/>
            <person name="Aury J.-M."/>
            <person name="Jaillon O."/>
            <person name="Wincker P."/>
            <person name="Clepet C."/>
            <person name="Menard M."/>
            <person name="Cruaud C."/>
            <person name="Quetier F."/>
            <person name="Scarpelli C."/>
            <person name="Schaechter V."/>
            <person name="Temple G."/>
            <person name="Caboche M."/>
            <person name="Weissenbach J."/>
            <person name="Salanoubat M."/>
        </authorList>
    </citation>
    <scope>NUCLEOTIDE SEQUENCE [LARGE SCALE MRNA] (ISOFORM 2)</scope>
    <source>
        <strain>cv. Columbia</strain>
    </source>
</reference>
<reference key="4">
    <citation type="submission" date="2002-03" db="EMBL/GenBank/DDBJ databases">
        <title>Full-length cDNA from Arabidopsis thaliana.</title>
        <authorList>
            <person name="Brover V.V."/>
            <person name="Troukhan M.E."/>
            <person name="Alexandrov N.A."/>
            <person name="Lu Y.-P."/>
            <person name="Flavell R.B."/>
            <person name="Feldmann K.A."/>
        </authorList>
    </citation>
    <scope>NUCLEOTIDE SEQUENCE [LARGE SCALE MRNA] (ISOFORM 1)</scope>
</reference>
<reference key="5">
    <citation type="journal article" date="2003" name="Science">
        <title>Empirical analysis of transcriptional activity in the Arabidopsis genome.</title>
        <authorList>
            <person name="Yamada K."/>
            <person name="Lim J."/>
            <person name="Dale J.M."/>
            <person name="Chen H."/>
            <person name="Shinn P."/>
            <person name="Palm C.J."/>
            <person name="Southwick A.M."/>
            <person name="Wu H.C."/>
            <person name="Kim C.J."/>
            <person name="Nguyen M."/>
            <person name="Pham P.K."/>
            <person name="Cheuk R.F."/>
            <person name="Karlin-Newmann G."/>
            <person name="Liu S.X."/>
            <person name="Lam B."/>
            <person name="Sakano H."/>
            <person name="Wu T."/>
            <person name="Yu G."/>
            <person name="Miranda M."/>
            <person name="Quach H.L."/>
            <person name="Tripp M."/>
            <person name="Chang C.H."/>
            <person name="Lee J.M."/>
            <person name="Toriumi M.J."/>
            <person name="Chan M.M."/>
            <person name="Tang C.C."/>
            <person name="Onodera C.S."/>
            <person name="Deng J.M."/>
            <person name="Akiyama K."/>
            <person name="Ansari Y."/>
            <person name="Arakawa T."/>
            <person name="Banh J."/>
            <person name="Banno F."/>
            <person name="Bowser L."/>
            <person name="Brooks S.Y."/>
            <person name="Carninci P."/>
            <person name="Chao Q."/>
            <person name="Choy N."/>
            <person name="Enju A."/>
            <person name="Goldsmith A.D."/>
            <person name="Gurjal M."/>
            <person name="Hansen N.F."/>
            <person name="Hayashizaki Y."/>
            <person name="Johnson-Hopson C."/>
            <person name="Hsuan V.W."/>
            <person name="Iida K."/>
            <person name="Karnes M."/>
            <person name="Khan S."/>
            <person name="Koesema E."/>
            <person name="Ishida J."/>
            <person name="Jiang P.X."/>
            <person name="Jones T."/>
            <person name="Kawai J."/>
            <person name="Kamiya A."/>
            <person name="Meyers C."/>
            <person name="Nakajima M."/>
            <person name="Narusaka M."/>
            <person name="Seki M."/>
            <person name="Sakurai T."/>
            <person name="Satou M."/>
            <person name="Tamse R."/>
            <person name="Vaysberg M."/>
            <person name="Wallender E.K."/>
            <person name="Wong C."/>
            <person name="Yamamura Y."/>
            <person name="Yuan S."/>
            <person name="Shinozaki K."/>
            <person name="Davis R.W."/>
            <person name="Theologis A."/>
            <person name="Ecker J.R."/>
        </authorList>
    </citation>
    <scope>NUCLEOTIDE SEQUENCE [LARGE SCALE MRNA] OF 24-374 (ISOFORM 1)</scope>
    <source>
        <strain>cv. Columbia</strain>
    </source>
</reference>
<reference key="6">
    <citation type="journal article" date="2012" name="Mol. Cell. Proteomics">
        <title>Comparative large-scale characterisation of plant vs. mammal proteins reveals similar and idiosyncratic N-alpha acetylation features.</title>
        <authorList>
            <person name="Bienvenut W.V."/>
            <person name="Sumpton D."/>
            <person name="Martinez A."/>
            <person name="Lilla S."/>
            <person name="Espagne C."/>
            <person name="Meinnel T."/>
            <person name="Giglione C."/>
        </authorList>
    </citation>
    <scope>ACETYLATION [LARGE SCALE ANALYSIS] AT SER-2</scope>
    <scope>CLEAVAGE OF INITIATOR METHIONINE [LARGE SCALE ANALYSIS]</scope>
    <scope>IDENTIFICATION BY MASS SPECTROMETRY [LARGE SCALE ANALYSIS]</scope>
</reference>
<gene>
    <name type="ordered locus">At2g05830</name>
    <name type="ORF">T6P5.3</name>
</gene>
<keyword id="KW-0007">Acetylation</keyword>
<keyword id="KW-0025">Alternative splicing</keyword>
<keyword id="KW-0028">Amino-acid biosynthesis</keyword>
<keyword id="KW-0963">Cytoplasm</keyword>
<keyword id="KW-0413">Isomerase</keyword>
<keyword id="KW-0486">Methionine biosynthesis</keyword>
<keyword id="KW-0539">Nucleus</keyword>
<keyword id="KW-1185">Reference proteome</keyword>
<protein>
    <recommendedName>
        <fullName evidence="1">Methylthioribose-1-phosphate isomerase</fullName>
        <shortName evidence="1">M1Pi</shortName>
        <shortName evidence="1">MTR-1-P isomerase</shortName>
        <ecNumber evidence="1">5.3.1.23</ecNumber>
    </recommendedName>
    <alternativeName>
        <fullName evidence="1">S-methyl-5-thioribose-1-phosphate isomerase</fullName>
    </alternativeName>
    <alternativeName>
        <fullName evidence="1">Translation initiation factor eIF-2B subunit alpha/beta/delta-like protein</fullName>
    </alternativeName>
</protein>
<accession>Q9ZUG4</accession>
<accession>Q8L5B9</accession>
<accession>Q8LAU5</accession>
<dbReference type="EC" id="5.3.1.23" evidence="1"/>
<dbReference type="EMBL" id="AC005970">
    <property type="protein sequence ID" value="AAC95160.2"/>
    <property type="molecule type" value="Genomic_DNA"/>
</dbReference>
<dbReference type="EMBL" id="CP002685">
    <property type="protein sequence ID" value="AEC05975.1"/>
    <property type="molecule type" value="Genomic_DNA"/>
</dbReference>
<dbReference type="EMBL" id="CP002685">
    <property type="protein sequence ID" value="AEC05976.1"/>
    <property type="molecule type" value="Genomic_DNA"/>
</dbReference>
<dbReference type="EMBL" id="CP002685">
    <property type="protein sequence ID" value="AEC05977.1"/>
    <property type="molecule type" value="Genomic_DNA"/>
</dbReference>
<dbReference type="EMBL" id="BX820068">
    <property type="status" value="NOT_ANNOTATED_CDS"/>
    <property type="molecule type" value="mRNA"/>
</dbReference>
<dbReference type="EMBL" id="AY087601">
    <property type="protein sequence ID" value="AAM65143.1"/>
    <property type="molecule type" value="mRNA"/>
</dbReference>
<dbReference type="EMBL" id="AY099595">
    <property type="protein sequence ID" value="AAM20446.1"/>
    <property type="status" value="ALT_INIT"/>
    <property type="molecule type" value="mRNA"/>
</dbReference>
<dbReference type="EMBL" id="AY128839">
    <property type="protein sequence ID" value="AAM91239.1"/>
    <property type="molecule type" value="mRNA"/>
</dbReference>
<dbReference type="PIR" id="H84471">
    <property type="entry name" value="H84471"/>
</dbReference>
<dbReference type="RefSeq" id="NP_001031339.1">
    <molecule id="Q9ZUG4-2"/>
    <property type="nucleotide sequence ID" value="NM_001036262.1"/>
</dbReference>
<dbReference type="RefSeq" id="NP_027726.1">
    <molecule id="Q9ZUG4-1"/>
    <property type="nucleotide sequence ID" value="NM_126596.4"/>
</dbReference>
<dbReference type="RefSeq" id="NP_973428.1">
    <molecule id="Q9ZUG4-2"/>
    <property type="nucleotide sequence ID" value="NM_201699.2"/>
</dbReference>
<dbReference type="SMR" id="Q9ZUG4"/>
<dbReference type="BioGRID" id="533">
    <property type="interactions" value="17"/>
</dbReference>
<dbReference type="FunCoup" id="Q9ZUG4">
    <property type="interactions" value="3865"/>
</dbReference>
<dbReference type="IntAct" id="Q9ZUG4">
    <property type="interactions" value="7"/>
</dbReference>
<dbReference type="STRING" id="3702.Q9ZUG4"/>
<dbReference type="iPTMnet" id="Q9ZUG4"/>
<dbReference type="PaxDb" id="3702-AT2G05830.1"/>
<dbReference type="ProteomicsDB" id="250968">
    <molecule id="Q9ZUG4-1"/>
</dbReference>
<dbReference type="DNASU" id="815134"/>
<dbReference type="EnsemblPlants" id="AT2G05830.1">
    <molecule id="Q9ZUG4-1"/>
    <property type="protein sequence ID" value="AT2G05830.1"/>
    <property type="gene ID" value="AT2G05830"/>
</dbReference>
<dbReference type="EnsemblPlants" id="AT2G05830.2">
    <molecule id="Q9ZUG4-2"/>
    <property type="protein sequence ID" value="AT2G05830.2"/>
    <property type="gene ID" value="AT2G05830"/>
</dbReference>
<dbReference type="EnsemblPlants" id="AT2G05830.3">
    <molecule id="Q9ZUG4-2"/>
    <property type="protein sequence ID" value="AT2G05830.3"/>
    <property type="gene ID" value="AT2G05830"/>
</dbReference>
<dbReference type="GeneID" id="815134"/>
<dbReference type="Gramene" id="AT2G05830.1">
    <molecule id="Q9ZUG4-1"/>
    <property type="protein sequence ID" value="AT2G05830.1"/>
    <property type="gene ID" value="AT2G05830"/>
</dbReference>
<dbReference type="Gramene" id="AT2G05830.2">
    <molecule id="Q9ZUG4-2"/>
    <property type="protein sequence ID" value="AT2G05830.2"/>
    <property type="gene ID" value="AT2G05830"/>
</dbReference>
<dbReference type="Gramene" id="AT2G05830.3">
    <molecule id="Q9ZUG4-2"/>
    <property type="protein sequence ID" value="AT2G05830.3"/>
    <property type="gene ID" value="AT2G05830"/>
</dbReference>
<dbReference type="KEGG" id="ath:AT2G05830"/>
<dbReference type="Araport" id="AT2G05830"/>
<dbReference type="TAIR" id="AT2G05830">
    <property type="gene designation" value="MTI1"/>
</dbReference>
<dbReference type="eggNOG" id="KOG1468">
    <property type="taxonomic scope" value="Eukaryota"/>
</dbReference>
<dbReference type="InParanoid" id="Q9ZUG4"/>
<dbReference type="OMA" id="CETRPLN"/>
<dbReference type="PhylomeDB" id="Q9ZUG4"/>
<dbReference type="BioCyc" id="ARA:AT2G05830-MONOMER"/>
<dbReference type="UniPathway" id="UPA00904">
    <property type="reaction ID" value="UER00874"/>
</dbReference>
<dbReference type="PRO" id="PR:Q9ZUG4"/>
<dbReference type="Proteomes" id="UP000006548">
    <property type="component" value="Chromosome 2"/>
</dbReference>
<dbReference type="ExpressionAtlas" id="Q9ZUG4">
    <property type="expression patterns" value="baseline and differential"/>
</dbReference>
<dbReference type="GO" id="GO:0005739">
    <property type="term" value="C:mitochondrion"/>
    <property type="evidence" value="ECO:0007005"/>
    <property type="project" value="TAIR"/>
</dbReference>
<dbReference type="GO" id="GO:0005634">
    <property type="term" value="C:nucleus"/>
    <property type="evidence" value="ECO:0007669"/>
    <property type="project" value="UniProtKB-SubCell"/>
</dbReference>
<dbReference type="GO" id="GO:0009506">
    <property type="term" value="C:plasmodesma"/>
    <property type="evidence" value="ECO:0007005"/>
    <property type="project" value="TAIR"/>
</dbReference>
<dbReference type="GO" id="GO:0046523">
    <property type="term" value="F:S-methyl-5-thioribose-1-phosphate isomerase activity"/>
    <property type="evidence" value="ECO:0007669"/>
    <property type="project" value="UniProtKB-UniRule"/>
</dbReference>
<dbReference type="GO" id="GO:0019509">
    <property type="term" value="P:L-methionine salvage from methylthioadenosine"/>
    <property type="evidence" value="ECO:0007669"/>
    <property type="project" value="UniProtKB-UniRule"/>
</dbReference>
<dbReference type="FunFam" id="1.20.120.420:FF:000002">
    <property type="entry name" value="Methylthioribose-1-phosphate isomerase"/>
    <property type="match status" value="1"/>
</dbReference>
<dbReference type="FunFam" id="3.40.50.10470:FF:000003">
    <property type="entry name" value="Methylthioribose-1-phosphate isomerase"/>
    <property type="match status" value="1"/>
</dbReference>
<dbReference type="Gene3D" id="1.20.120.420">
    <property type="entry name" value="translation initiation factor eif-2b, domain 1"/>
    <property type="match status" value="1"/>
</dbReference>
<dbReference type="Gene3D" id="3.40.50.10470">
    <property type="entry name" value="Translation initiation factor eif-2b, domain 2"/>
    <property type="match status" value="1"/>
</dbReference>
<dbReference type="HAMAP" id="MF_01678">
    <property type="entry name" value="Salvage_MtnA"/>
    <property type="match status" value="1"/>
</dbReference>
<dbReference type="InterPro" id="IPR000649">
    <property type="entry name" value="IF-2B-related"/>
</dbReference>
<dbReference type="InterPro" id="IPR005251">
    <property type="entry name" value="IF-M1Pi"/>
</dbReference>
<dbReference type="InterPro" id="IPR042529">
    <property type="entry name" value="IF_2B-like_C"/>
</dbReference>
<dbReference type="InterPro" id="IPR011559">
    <property type="entry name" value="Initiation_fac_2B_a/b/d"/>
</dbReference>
<dbReference type="InterPro" id="IPR027363">
    <property type="entry name" value="M1Pi_N"/>
</dbReference>
<dbReference type="InterPro" id="IPR037171">
    <property type="entry name" value="NagB/RpiA_transferase-like"/>
</dbReference>
<dbReference type="NCBIfam" id="TIGR00524">
    <property type="entry name" value="eIF-2B_rel"/>
    <property type="match status" value="1"/>
</dbReference>
<dbReference type="NCBIfam" id="NF004326">
    <property type="entry name" value="PRK05720.1"/>
    <property type="match status" value="1"/>
</dbReference>
<dbReference type="NCBIfam" id="TIGR00512">
    <property type="entry name" value="salvage_mtnA"/>
    <property type="match status" value="1"/>
</dbReference>
<dbReference type="PANTHER" id="PTHR43475">
    <property type="entry name" value="METHYLTHIORIBOSE-1-PHOSPHATE ISOMERASE"/>
    <property type="match status" value="1"/>
</dbReference>
<dbReference type="PANTHER" id="PTHR43475:SF1">
    <property type="entry name" value="METHYLTHIORIBOSE-1-PHOSPHATE ISOMERASE"/>
    <property type="match status" value="1"/>
</dbReference>
<dbReference type="Pfam" id="PF01008">
    <property type="entry name" value="IF-2B"/>
    <property type="match status" value="1"/>
</dbReference>
<dbReference type="SUPFAM" id="SSF100950">
    <property type="entry name" value="NagB/RpiA/CoA transferase-like"/>
    <property type="match status" value="1"/>
</dbReference>
<name>MTNA_ARATH</name>
<feature type="initiator methionine" description="Removed" evidence="4">
    <location>
        <position position="1"/>
    </location>
</feature>
<feature type="chain" id="PRO_0000401989" description="Methylthioribose-1-phosphate isomerase">
    <location>
        <begin position="2"/>
        <end position="374"/>
    </location>
</feature>
<feature type="active site" description="Proton donor" evidence="1">
    <location>
        <position position="253"/>
    </location>
</feature>
<feature type="site" description="Transition state stabilizer" evidence="1">
    <location>
        <position position="173"/>
    </location>
</feature>
<feature type="modified residue" description="N-acetylserine" evidence="4">
    <location>
        <position position="2"/>
    </location>
</feature>
<feature type="splice variant" id="VSP_040227" description="In isoform 2." evidence="2">
    <location>
        <begin position="1"/>
        <end position="48"/>
    </location>
</feature>
<feature type="sequence conflict" description="In Ref. 4; AAM65143." evidence="3" ref="4">
    <original>A</original>
    <variation>T</variation>
    <location>
        <position position="61"/>
    </location>
</feature>
<feature type="sequence conflict" description="In Ref. 3; BX820068." evidence="3" ref="3">
    <original>K</original>
    <variation>R</variation>
    <location>
        <position position="109"/>
    </location>
</feature>
<feature type="sequence conflict" description="In Ref. 4; AAM65143." evidence="3" ref="4">
    <original>M</original>
    <variation>L</variation>
    <location>
        <position position="311"/>
    </location>
</feature>
<proteinExistence type="evidence at protein level"/>
<organism>
    <name type="scientific">Arabidopsis thaliana</name>
    <name type="common">Mouse-ear cress</name>
    <dbReference type="NCBI Taxonomy" id="3702"/>
    <lineage>
        <taxon>Eukaryota</taxon>
        <taxon>Viridiplantae</taxon>
        <taxon>Streptophyta</taxon>
        <taxon>Embryophyta</taxon>
        <taxon>Tracheophyta</taxon>
        <taxon>Spermatophyta</taxon>
        <taxon>Magnoliopsida</taxon>
        <taxon>eudicotyledons</taxon>
        <taxon>Gunneridae</taxon>
        <taxon>Pentapetalae</taxon>
        <taxon>rosids</taxon>
        <taxon>malvids</taxon>
        <taxon>Brassicales</taxon>
        <taxon>Brassicaceae</taxon>
        <taxon>Camelineae</taxon>
        <taxon>Arabidopsis</taxon>
    </lineage>
</organism>
<sequence length="374" mass="39612">MSGEGDTTLKAICYKPGSLQLLDQRKLPLETIYLEIRDASDGWSAIQEMVVRGAPAIAIAAALSLAVEVFNFHGFDGSASDAVAFLENKLDYLVSSRPTAVNLADAALKLKHVIAKALATATEAKSIFKAYIEASEDMLEDDVVSNKAIGNFGLSLLRQQAKNPDKLSVLTHCNTGSLATAGYGTALGVIRALHTQGILERAYCTETRPFNQGSRLTAFELVHEKIPATLIADSAAAALMKDGRVDGVIVGADRVASNGDTANKIGTYSLALCAKHHGIPFYVAAPLTSVDLSLSSGKEIVIEERSPKELMHTHGGLGERIAAPGISVWNPAFDMTPAELIAGIITEKGVITKNGNDTFDISSFAKKITGNSSR</sequence>
<evidence type="ECO:0000255" key="1">
    <source>
        <dbReference type="HAMAP-Rule" id="MF_03119"/>
    </source>
</evidence>
<evidence type="ECO:0000303" key="2">
    <source>
    </source>
</evidence>
<evidence type="ECO:0000305" key="3"/>
<evidence type="ECO:0007744" key="4">
    <source>
    </source>
</evidence>